<feature type="initiator methionine" description="Removed" evidence="6">
    <location>
        <position position="1"/>
    </location>
</feature>
<feature type="chain" id="PRO_0000128313" description="T-complex protein 1 subunit alpha">
    <location>
        <begin position="2"/>
        <end position="545"/>
    </location>
</feature>
<feature type="modified residue" description="N-acetylserine" evidence="6">
    <location>
        <position position="2"/>
    </location>
</feature>
<feature type="sequence conflict" description="In Ref. 5; AAN72063." evidence="2" ref="5">
    <original>I</original>
    <variation>V</variation>
    <location>
        <position position="289"/>
    </location>
</feature>
<sequence>MSISAQNPDISGDRQSGQDVRTQNVMACQAVSNIVKTSLGPVGLDKMLVDDIGDVTITNDGATILRMLEVEHPAAKVLVELAELQDREVGDGTTSVVIVAAELLKRANDLVRNKIHPTSIISGYRLAMRESCKYIEEKLVTKVEKLGKVPLINCAKTSMSSKLISGDSDFFANLVVEAVLSVKMTNQRGEIKYPIKGINILKAHGQSARDSYLLNGYALNTGRAAQGMPLRVSPAKIACLDFNLQKTKMQLGVQVVVNDPRELEKIRQREADMTKERIEKLLKAGANVILTTKGIDDMALKYFVEAGAIAVRRVRKEDMRHVAKATGATLVTTFADMEGEETFDPAHLGSADEVVEERIADDDVILIKGTKTSSAVSLILRGANDYMLDEMERALHDALCIVKRTLESNTVVAGGGAVESALSVYLEHLATTLGSREQLAIAEFADALLIIPKVLAVNAAKDATELVAKLRAYHHTAQTKADKKHYSSMGLDLVNGTIRNNLEAGVIEPAMSKVKIIQFATEAAITILRIDDMIKLVKDESQGEE</sequence>
<name>TCPA_ARATH</name>
<comment type="function">
    <text evidence="2">Molecular chaperone; assists the folding of proteins upon ATP hydrolysis. Known to play a role, in vitro, in the folding of actin and tubulin.</text>
</comment>
<comment type="subunit">
    <text evidence="3">Heterooligomeric complex of about 850 to 900 kDa that forms two stacked rings, 12 to 16 nm in diameter.</text>
</comment>
<comment type="subcellular location">
    <subcellularLocation>
        <location evidence="2">Cytoplasm</location>
    </subcellularLocation>
</comment>
<comment type="similarity">
    <text evidence="2">Belongs to the TCP-1 chaperonin family.</text>
</comment>
<comment type="sequence caution" evidence="2">
    <conflict type="erroneous gene model prediction">
        <sequence resource="EMBL-CDS" id="BAB01862"/>
    </conflict>
</comment>
<accession>P28769</accession>
<accession>Q5E917</accession>
<accession>Q8H0U0</accession>
<accession>Q9LJZ6</accession>
<organism>
    <name type="scientific">Arabidopsis thaliana</name>
    <name type="common">Mouse-ear cress</name>
    <dbReference type="NCBI Taxonomy" id="3702"/>
    <lineage>
        <taxon>Eukaryota</taxon>
        <taxon>Viridiplantae</taxon>
        <taxon>Streptophyta</taxon>
        <taxon>Embryophyta</taxon>
        <taxon>Tracheophyta</taxon>
        <taxon>Spermatophyta</taxon>
        <taxon>Magnoliopsida</taxon>
        <taxon>eudicotyledons</taxon>
        <taxon>Gunneridae</taxon>
        <taxon>Pentapetalae</taxon>
        <taxon>rosids</taxon>
        <taxon>malvids</taxon>
        <taxon>Brassicales</taxon>
        <taxon>Brassicaceae</taxon>
        <taxon>Camelineae</taxon>
        <taxon>Arabidopsis</taxon>
    </lineage>
</organism>
<protein>
    <recommendedName>
        <fullName evidence="1">T-complex protein 1 subunit alpha</fullName>
        <shortName evidence="1">TCP-1-alpha</shortName>
    </recommendedName>
    <alternativeName>
        <fullName evidence="1">CCT-alpha</fullName>
    </alternativeName>
    <alternativeName>
        <fullName evidence="2">Chaperonin CCT1</fullName>
    </alternativeName>
</protein>
<evidence type="ECO:0000303" key="1">
    <source>
    </source>
</evidence>
<evidence type="ECO:0000305" key="2"/>
<evidence type="ECO:0000305" key="3">
    <source>
    </source>
</evidence>
<evidence type="ECO:0000312" key="4">
    <source>
        <dbReference type="Araport" id="AT3G20050"/>
    </source>
</evidence>
<evidence type="ECO:0000312" key="5">
    <source>
        <dbReference type="EMBL" id="BAA21772.1"/>
    </source>
</evidence>
<evidence type="ECO:0007744" key="6">
    <source>
    </source>
</evidence>
<reference key="1">
    <citation type="journal article" date="1992" name="Gene">
        <title>Cloning of a cDNA encoding the Tcp-1 (t complex polypeptide 1) homologue of Arabidopsis thaliana.</title>
        <authorList>
            <person name="Mori M."/>
            <person name="Murata K."/>
            <person name="Kubota H."/>
            <person name="Yamamoto A."/>
            <person name="Matsushiro A."/>
            <person name="Morita T."/>
        </authorList>
    </citation>
    <scope>NUCLEOTIDE SEQUENCE [MRNA]</scope>
</reference>
<reference key="2">
    <citation type="submission" date="1997-08" db="EMBL/GenBank/DDBJ databases">
        <authorList>
            <person name="Mori M."/>
            <person name="Kuno N."/>
            <person name="Murata K."/>
            <person name="Kubota H."/>
            <person name="Furuya M."/>
            <person name="Matsushiro A."/>
            <person name="Morita T."/>
        </authorList>
    </citation>
    <scope>NUCLEOTIDE SEQUENCE [GENOMIC DNA]</scope>
    <source>
        <strain>cv. Columbia</strain>
    </source>
</reference>
<reference key="3">
    <citation type="journal article" date="2000" name="DNA Res.">
        <title>Structural analysis of Arabidopsis thaliana chromosome 3. II. Sequence features of the 4,251,695 bp regions covered by 90 P1, TAC and BAC clones.</title>
        <authorList>
            <person name="Kaneko T."/>
            <person name="Katoh T."/>
            <person name="Sato S."/>
            <person name="Nakamura Y."/>
            <person name="Asamizu E."/>
            <person name="Tabata S."/>
        </authorList>
    </citation>
    <scope>NUCLEOTIDE SEQUENCE [LARGE SCALE GENOMIC DNA]</scope>
    <source>
        <strain>cv. Columbia</strain>
    </source>
</reference>
<reference key="4">
    <citation type="journal article" date="2017" name="Plant J.">
        <title>Araport11: a complete reannotation of the Arabidopsis thaliana reference genome.</title>
        <authorList>
            <person name="Cheng C.Y."/>
            <person name="Krishnakumar V."/>
            <person name="Chan A.P."/>
            <person name="Thibaud-Nissen F."/>
            <person name="Schobel S."/>
            <person name="Town C.D."/>
        </authorList>
    </citation>
    <scope>GENOME REANNOTATION</scope>
    <source>
        <strain>cv. Columbia</strain>
    </source>
</reference>
<reference key="5">
    <citation type="journal article" date="2003" name="Science">
        <title>Empirical analysis of transcriptional activity in the Arabidopsis genome.</title>
        <authorList>
            <person name="Yamada K."/>
            <person name="Lim J."/>
            <person name="Dale J.M."/>
            <person name="Chen H."/>
            <person name="Shinn P."/>
            <person name="Palm C.J."/>
            <person name="Southwick A.M."/>
            <person name="Wu H.C."/>
            <person name="Kim C.J."/>
            <person name="Nguyen M."/>
            <person name="Pham P.K."/>
            <person name="Cheuk R.F."/>
            <person name="Karlin-Newmann G."/>
            <person name="Liu S.X."/>
            <person name="Lam B."/>
            <person name="Sakano H."/>
            <person name="Wu T."/>
            <person name="Yu G."/>
            <person name="Miranda M."/>
            <person name="Quach H.L."/>
            <person name="Tripp M."/>
            <person name="Chang C.H."/>
            <person name="Lee J.M."/>
            <person name="Toriumi M.J."/>
            <person name="Chan M.M."/>
            <person name="Tang C.C."/>
            <person name="Onodera C.S."/>
            <person name="Deng J.M."/>
            <person name="Akiyama K."/>
            <person name="Ansari Y."/>
            <person name="Arakawa T."/>
            <person name="Banh J."/>
            <person name="Banno F."/>
            <person name="Bowser L."/>
            <person name="Brooks S.Y."/>
            <person name="Carninci P."/>
            <person name="Chao Q."/>
            <person name="Choy N."/>
            <person name="Enju A."/>
            <person name="Goldsmith A.D."/>
            <person name="Gurjal M."/>
            <person name="Hansen N.F."/>
            <person name="Hayashizaki Y."/>
            <person name="Johnson-Hopson C."/>
            <person name="Hsuan V.W."/>
            <person name="Iida K."/>
            <person name="Karnes M."/>
            <person name="Khan S."/>
            <person name="Koesema E."/>
            <person name="Ishida J."/>
            <person name="Jiang P.X."/>
            <person name="Jones T."/>
            <person name="Kawai J."/>
            <person name="Kamiya A."/>
            <person name="Meyers C."/>
            <person name="Nakajima M."/>
            <person name="Narusaka M."/>
            <person name="Seki M."/>
            <person name="Sakurai T."/>
            <person name="Satou M."/>
            <person name="Tamse R."/>
            <person name="Vaysberg M."/>
            <person name="Wallender E.K."/>
            <person name="Wong C."/>
            <person name="Yamamura Y."/>
            <person name="Yuan S."/>
            <person name="Shinozaki K."/>
            <person name="Davis R.W."/>
            <person name="Theologis A."/>
            <person name="Ecker J.R."/>
        </authorList>
    </citation>
    <scope>NUCLEOTIDE SEQUENCE [LARGE SCALE MRNA]</scope>
    <source>
        <strain>cv. Columbia</strain>
    </source>
</reference>
<reference key="6">
    <citation type="submission" date="2005-02" db="EMBL/GenBank/DDBJ databases">
        <title>Arabidopsis ORF clones.</title>
        <authorList>
            <person name="Cheuk R."/>
            <person name="Chen H."/>
            <person name="Kim C.J."/>
            <person name="Shinn P."/>
            <person name="Ecker J.R."/>
        </authorList>
    </citation>
    <scope>NUCLEOTIDE SEQUENCE [LARGE SCALE MRNA]</scope>
</reference>
<reference key="7">
    <citation type="journal article" date="2001" name="Cell Stress Chaperones">
        <title>Arabidopsis thaliana type I and II chaperonins.</title>
        <authorList>
            <person name="Hill J.E."/>
            <person name="Hemmingsen S.M."/>
        </authorList>
    </citation>
    <scope>GENE FAMILY</scope>
    <scope>NOMENCLATURE</scope>
    <scope>SUBUNIT</scope>
</reference>
<reference key="8">
    <citation type="journal article" date="2012" name="Mol. Cell. Proteomics">
        <title>Comparative large-scale characterisation of plant vs. mammal proteins reveals similar and idiosyncratic N-alpha acetylation features.</title>
        <authorList>
            <person name="Bienvenut W.V."/>
            <person name="Sumpton D."/>
            <person name="Martinez A."/>
            <person name="Lilla S."/>
            <person name="Espagne C."/>
            <person name="Meinnel T."/>
            <person name="Giglione C."/>
        </authorList>
    </citation>
    <scope>ACETYLATION [LARGE SCALE ANALYSIS] AT SER-2</scope>
    <scope>CLEAVAGE OF INITIATOR METHIONINE [LARGE SCALE ANALYSIS]</scope>
    <scope>IDENTIFICATION BY MASS SPECTROMETRY [LARGE SCALE ANALYSIS]</scope>
</reference>
<proteinExistence type="evidence at protein level"/>
<gene>
    <name evidence="2" type="primary">CCT1</name>
    <name evidence="4" type="ordered locus">At3g20050</name>
    <name evidence="5" type="ORF">MAL21.5</name>
</gene>
<dbReference type="EMBL" id="D11351">
    <property type="protein sequence ID" value="BAA01955.1"/>
    <property type="molecule type" value="mRNA"/>
</dbReference>
<dbReference type="EMBL" id="D11352">
    <property type="protein sequence ID" value="BAA21772.1"/>
    <property type="molecule type" value="Genomic_DNA"/>
</dbReference>
<dbReference type="EMBL" id="AP000383">
    <property type="protein sequence ID" value="BAB01862.1"/>
    <property type="status" value="ALT_SEQ"/>
    <property type="molecule type" value="Genomic_DNA"/>
</dbReference>
<dbReference type="EMBL" id="CP002686">
    <property type="protein sequence ID" value="AEE76324.1"/>
    <property type="molecule type" value="Genomic_DNA"/>
</dbReference>
<dbReference type="EMBL" id="BT002052">
    <property type="protein sequence ID" value="AAN72063.1"/>
    <property type="molecule type" value="mRNA"/>
</dbReference>
<dbReference type="EMBL" id="BT021103">
    <property type="protein sequence ID" value="AAX12873.1"/>
    <property type="molecule type" value="mRNA"/>
</dbReference>
<dbReference type="PIR" id="JN0448">
    <property type="entry name" value="JN0448"/>
</dbReference>
<dbReference type="SMR" id="P28769"/>
<dbReference type="BioGRID" id="6876">
    <property type="interactions" value="74"/>
</dbReference>
<dbReference type="FunCoup" id="P28769">
    <property type="interactions" value="4881"/>
</dbReference>
<dbReference type="IntAct" id="P28769">
    <property type="interactions" value="11"/>
</dbReference>
<dbReference type="STRING" id="3702.P28769"/>
<dbReference type="iPTMnet" id="P28769"/>
<dbReference type="PaxDb" id="3702-AT3G20050.1"/>
<dbReference type="ProteomicsDB" id="233018"/>
<dbReference type="EnsemblPlants" id="AT3G20050.1">
    <property type="protein sequence ID" value="AT3G20050.1"/>
    <property type="gene ID" value="AT3G20050"/>
</dbReference>
<dbReference type="Gramene" id="AT3G20050.1">
    <property type="protein sequence ID" value="AT3G20050.1"/>
    <property type="gene ID" value="AT3G20050"/>
</dbReference>
<dbReference type="KEGG" id="ath:AT3G20050"/>
<dbReference type="Araport" id="AT3G20050"/>
<dbReference type="TAIR" id="AT3G20050">
    <property type="gene designation" value="TCP-1"/>
</dbReference>
<dbReference type="eggNOG" id="KOG0360">
    <property type="taxonomic scope" value="Eukaryota"/>
</dbReference>
<dbReference type="HOGENOM" id="CLU_008891_7_3_1"/>
<dbReference type="InParanoid" id="P28769"/>
<dbReference type="OMA" id="RGPNDYQ"/>
<dbReference type="OrthoDB" id="1047407at2759"/>
<dbReference type="PhylomeDB" id="P28769"/>
<dbReference type="BRENDA" id="3.6.4.B10">
    <property type="organism ID" value="399"/>
</dbReference>
<dbReference type="CD-CODE" id="4299E36E">
    <property type="entry name" value="Nucleolus"/>
</dbReference>
<dbReference type="PRO" id="PR:P28769"/>
<dbReference type="Proteomes" id="UP000006548">
    <property type="component" value="Chromosome 3"/>
</dbReference>
<dbReference type="ExpressionAtlas" id="P28769">
    <property type="expression patterns" value="baseline and differential"/>
</dbReference>
<dbReference type="GO" id="GO:0005829">
    <property type="term" value="C:cytosol"/>
    <property type="evidence" value="ECO:0007005"/>
    <property type="project" value="TAIR"/>
</dbReference>
<dbReference type="GO" id="GO:0005524">
    <property type="term" value="F:ATP binding"/>
    <property type="evidence" value="ECO:0007669"/>
    <property type="project" value="UniProtKB-KW"/>
</dbReference>
<dbReference type="GO" id="GO:0016887">
    <property type="term" value="F:ATP hydrolysis activity"/>
    <property type="evidence" value="ECO:0007669"/>
    <property type="project" value="InterPro"/>
</dbReference>
<dbReference type="GO" id="GO:0140662">
    <property type="term" value="F:ATP-dependent protein folding chaperone"/>
    <property type="evidence" value="ECO:0007669"/>
    <property type="project" value="InterPro"/>
</dbReference>
<dbReference type="GO" id="GO:0051082">
    <property type="term" value="F:unfolded protein binding"/>
    <property type="evidence" value="ECO:0007669"/>
    <property type="project" value="InterPro"/>
</dbReference>
<dbReference type="CDD" id="cd03335">
    <property type="entry name" value="TCP1_alpha"/>
    <property type="match status" value="1"/>
</dbReference>
<dbReference type="FunFam" id="3.50.7.10:FF:000009">
    <property type="entry name" value="T-complex protein 1 subunit alpha"/>
    <property type="match status" value="1"/>
</dbReference>
<dbReference type="FunFam" id="1.10.560.10:FF:000070">
    <property type="entry name" value="Uncharacterized protein"/>
    <property type="match status" value="1"/>
</dbReference>
<dbReference type="Gene3D" id="3.50.7.10">
    <property type="entry name" value="GroEL"/>
    <property type="match status" value="1"/>
</dbReference>
<dbReference type="Gene3D" id="1.10.560.10">
    <property type="entry name" value="GroEL-like equatorial domain"/>
    <property type="match status" value="1"/>
</dbReference>
<dbReference type="Gene3D" id="3.30.260.10">
    <property type="entry name" value="TCP-1-like chaperonin intermediate domain"/>
    <property type="match status" value="1"/>
</dbReference>
<dbReference type="InterPro" id="IPR012715">
    <property type="entry name" value="Chap_CCT_alpha"/>
</dbReference>
<dbReference type="InterPro" id="IPR017998">
    <property type="entry name" value="Chaperone_TCP-1"/>
</dbReference>
<dbReference type="InterPro" id="IPR002194">
    <property type="entry name" value="Chaperonin_TCP-1_CS"/>
</dbReference>
<dbReference type="InterPro" id="IPR002423">
    <property type="entry name" value="Cpn60/GroEL/TCP-1"/>
</dbReference>
<dbReference type="InterPro" id="IPR027409">
    <property type="entry name" value="GroEL-like_apical_dom_sf"/>
</dbReference>
<dbReference type="InterPro" id="IPR027413">
    <property type="entry name" value="GROEL-like_equatorial_sf"/>
</dbReference>
<dbReference type="InterPro" id="IPR027410">
    <property type="entry name" value="TCP-1-like_intermed_sf"/>
</dbReference>
<dbReference type="InterPro" id="IPR053374">
    <property type="entry name" value="TCP-1_chaperonin"/>
</dbReference>
<dbReference type="InterPro" id="IPR054827">
    <property type="entry name" value="thermosome_alpha"/>
</dbReference>
<dbReference type="NCBIfam" id="TIGR02340">
    <property type="entry name" value="chap_CCT_alpha"/>
    <property type="match status" value="1"/>
</dbReference>
<dbReference type="NCBIfam" id="NF041082">
    <property type="entry name" value="thermosome_alpha"/>
    <property type="match status" value="1"/>
</dbReference>
<dbReference type="NCBIfam" id="NF041083">
    <property type="entry name" value="thermosome_beta"/>
    <property type="match status" value="1"/>
</dbReference>
<dbReference type="PANTHER" id="PTHR11353">
    <property type="entry name" value="CHAPERONIN"/>
    <property type="match status" value="1"/>
</dbReference>
<dbReference type="Pfam" id="PF00118">
    <property type="entry name" value="Cpn60_TCP1"/>
    <property type="match status" value="1"/>
</dbReference>
<dbReference type="PRINTS" id="PR00304">
    <property type="entry name" value="TCOMPLEXTCP1"/>
</dbReference>
<dbReference type="SUPFAM" id="SSF52029">
    <property type="entry name" value="GroEL apical domain-like"/>
    <property type="match status" value="1"/>
</dbReference>
<dbReference type="SUPFAM" id="SSF48592">
    <property type="entry name" value="GroEL equatorial domain-like"/>
    <property type="match status" value="1"/>
</dbReference>
<dbReference type="SUPFAM" id="SSF54849">
    <property type="entry name" value="GroEL-intermediate domain like"/>
    <property type="match status" value="1"/>
</dbReference>
<dbReference type="PROSITE" id="PS00750">
    <property type="entry name" value="TCP1_1"/>
    <property type="match status" value="1"/>
</dbReference>
<dbReference type="PROSITE" id="PS00751">
    <property type="entry name" value="TCP1_2"/>
    <property type="match status" value="1"/>
</dbReference>
<dbReference type="PROSITE" id="PS00995">
    <property type="entry name" value="TCP1_3"/>
    <property type="match status" value="1"/>
</dbReference>
<keyword id="KW-0007">Acetylation</keyword>
<keyword id="KW-0067">ATP-binding</keyword>
<keyword id="KW-0143">Chaperone</keyword>
<keyword id="KW-0963">Cytoplasm</keyword>
<keyword id="KW-0547">Nucleotide-binding</keyword>
<keyword id="KW-1185">Reference proteome</keyword>